<accession>Q81871</accession>
<proteinExistence type="evidence at protein level"/>
<gene>
    <name type="ORF">ORF2</name>
</gene>
<protein>
    <recommendedName>
        <fullName>Pro-secreted protein ORF2</fullName>
    </recommendedName>
    <alternativeName>
        <fullName>Protein ORF2</fullName>
        <shortName>pORF2</shortName>
    </alternativeName>
    <component>
        <recommendedName>
            <fullName>Secreted protein ORF2</fullName>
            <shortName>ORF2s</shortName>
        </recommendedName>
    </component>
</protein>
<evidence type="ECO:0000250" key="1">
    <source>
        <dbReference type="UniProtKB" id="P29326"/>
    </source>
</evidence>
<evidence type="ECO:0000250" key="2">
    <source>
        <dbReference type="UniProtKB" id="P33426"/>
    </source>
</evidence>
<evidence type="ECO:0000250" key="3">
    <source>
        <dbReference type="UniProtKB" id="Q68985"/>
    </source>
</evidence>
<evidence type="ECO:0000250" key="4">
    <source>
        <dbReference type="UniProtKB" id="Q9YLQ9"/>
    </source>
</evidence>
<evidence type="ECO:0000255" key="5"/>
<evidence type="ECO:0000256" key="6">
    <source>
        <dbReference type="SAM" id="MobiDB-lite"/>
    </source>
</evidence>
<evidence type="ECO:0000269" key="7">
    <source>
    </source>
</evidence>
<evidence type="ECO:0000269" key="8">
    <source>
    </source>
</evidence>
<evidence type="ECO:0000269" key="9">
    <source>
    </source>
</evidence>
<evidence type="ECO:0000269" key="10">
    <source>
    </source>
</evidence>
<evidence type="ECO:0000269" key="11">
    <source>
    </source>
</evidence>
<evidence type="ECO:0000269" key="12">
    <source>
    </source>
</evidence>
<evidence type="ECO:0000305" key="13"/>
<sequence length="660" mass="70980">MRPRPILLLLLMFLPMLPAPPPGQPSGRRRGRRSGGSGGGFWGDRADSQPFAIPYIHPTNPFAPDVTAAAGAGPRVRQPARPLGSAWRDQAQRPAAASRRRPTTAGAAPLTAVAPAHDTPPVPDVDSRGAILRRQYNLSTSPLTSSVATGTNLVLYAAPLSPLLPLQDGTNTHIMATEASNYAQYRVVRATIRYRPLVPNAVGGYAISISFWPQTTTTPTSVDMNSITSTDVRILVQPGIASEHVIPSERLHYRNQGWRSVETSGVAEEEATSGLVMLCIHGSLVNSYTNTPYTGALGLLDFALELEFRNLTPGNTNTRVSRYSSTARHRLRRGADGTAELTTTAATRFMKDLYFTSTNGVGEIGRGIALTLFNLADTLLGGLPTELISSAGGQLFYSRPVVSANGEPTVKLYTSVENAQQDKGIAIPHDIDLGESRVVIQDYDNQHEQDRPTPSPAPSRPFSVLRANDVLWLSLTAAEYDQSTYGSSTGPVYVSDSVTLVNVATGAQAVARSLDWTKVTLDGRPLSTTQQYSKTFFVLPLRGKLSFWEAGTTKAGYPYNYNTTASDQLLVENAAGHRVAISTYTTSLGAGPVSISAVAVLAPHSALALLEDTMDYPARAHTFDDFCPECRPLGLQGCAFQSTVAELQRLKMKVGKTREL</sequence>
<organismHost>
    <name type="scientific">Homo sapiens</name>
    <name type="common">Human</name>
    <dbReference type="NCBI Taxonomy" id="9606"/>
</organismHost>
<comment type="function">
    <molecule>Isoform Secreted protein ORF2</molecule>
    <text evidence="4">Plays a role in the inhibition of host antibody-mediated neutralization without blocking viral cell entry.</text>
</comment>
<comment type="function">
    <molecule>Isoform Capsid protein</molecule>
    <text evidence="1 2 7 8">Forms an icosahedral capsid with a T=1 symmetry and a 34 nm diameter. The capsid is composed of 60 copies linked to each other (By similarity). Binds to the 5' end of the genomic RNA to mediate genome encapsidation (By similarity). Binds to heparin surface proteoglycans (HSPGs) to mediate viral entry (PubMed:19812150). Additionally, the interactions with host ASGR1 and ASGR2 facilitate viral infection of hepatocytes (PubMed:27155063). Inhibits IFN production by blocking host TBK1-induced IRF3 phosphorylation (By similarity). The nuclear form probably modulates host gene expression (By similarity).</text>
</comment>
<comment type="subunit">
    <molecule>Isoform Secreted protein ORF2</molecule>
    <text evidence="4">Homodimer.</text>
</comment>
<comment type="subunit">
    <molecule>Isoform Capsid protein</molecule>
    <text evidence="3 8 9">Self-assembles to form the capsid. The capsid is dominated by dimers that define the 30 morphological units. Interacts with phosphorylated protein ORF3 (By similarity). Interacts with host TMEM134 (PubMed:27899274). Interacts with host ASGR1 and ASGR2; these interactions facilitate infection of host hepatocytes (PubMed:27155063).</text>
</comment>
<comment type="subcellular location">
    <molecule>Isoform Secreted protein ORF2</molecule>
    <subcellularLocation>
        <location evidence="4">Secreted</location>
    </subcellularLocation>
    <text evidence="3 4">Cotranslationally translocated into the ER (By similarity). Translation from the first AUG produces a full-length protein with a signal peptide that can direct the protein into the secretory pathway (By similarity).</text>
</comment>
<comment type="subcellular location">
    <molecule>Isoform Capsid protein</molecule>
    <subcellularLocation>
        <location evidence="11">Virion</location>
    </subcellularLocation>
    <subcellularLocation>
        <location evidence="10">Host cytoplasm</location>
    </subcellularLocation>
    <subcellularLocation>
        <location evidence="9">Host endoplasmic reticulum</location>
    </subcellularLocation>
    <subcellularLocation>
        <location evidence="9">Host Golgi apparatus</location>
    </subcellularLocation>
    <subcellularLocation>
        <location evidence="3">Host cell surface</location>
    </subcellularLocation>
    <subcellularLocation>
        <location evidence="10">Host nucleus</location>
    </subcellularLocation>
    <text evidence="2 4 11">Translation from the internal AUG codon disrupts the signal sequence, producing a cytoplasmic protein that is responsible for virion assembly (By similarity). Shuttles between cytoplasm and nucleus (By similarity). This isoform is found in quasi-enveloped virions (PubMed:35055972).</text>
</comment>
<comment type="alternative products">
    <event type="alternative initiation"/>
    <isoform>
        <id>Q81871-1</id>
        <name>Secreted protein ORF2</name>
        <name>ORF2s</name>
        <name>ORF2g</name>
        <sequence type="displayed"/>
    </isoform>
    <isoform>
        <id>Q81871-2</id>
        <name>Capsid protein</name>
        <name>ORF2c</name>
        <name>ORF2i</name>
        <sequence type="described" ref="VSP_059886"/>
    </isoform>
</comment>
<comment type="domain">
    <text evidence="2">The Arginine-Rich Motif (ARM) acts as a nuclear localization signal that drives the nuclear translocation of isoform capsid protein. This motif has also been linked to the inhibition of host IRF3 phosphorylation.</text>
</comment>
<comment type="PTM">
    <molecule>Pro-secreted protein ORF2</molecule>
    <text evidence="2">Cleaved by host proteases in the N-terminus.</text>
</comment>
<comment type="PTM">
    <molecule>Isoform Secreted protein ORF2</molecule>
    <text evidence="10">N-glycosylated.</text>
</comment>
<comment type="PTM">
    <molecule>Isoform Capsid protein</molecule>
    <text evidence="10 11">Not N-glycosylated (PubMed:31000788). The C-terminus of the capsid protein ORF2 is truncated in non-enveloped virions shedded in feces, probably due to host proteases (PubMed:35055972).</text>
</comment>
<comment type="miscellaneous">
    <text evidence="13">The viral particles present in feces and bile are non-enveloped, while those in circulating blood and culture supernatants are covered with a cellular membrane (quasi-enveloped).</text>
</comment>
<comment type="similarity">
    <text evidence="13">Belongs to the hepevirus capsid protein family.</text>
</comment>
<comment type="caution">
    <text evidence="10">A third cleaved product has been identified.</text>
</comment>
<name>CAPSD_HEVCH</name>
<dbReference type="EMBL" id="M94177">
    <property type="status" value="NOT_ANNOTATED_CDS"/>
    <property type="molecule type" value="Genomic_RNA"/>
</dbReference>
<dbReference type="EMBL" id="L08816">
    <property type="protein sequence ID" value="AAA03191.1"/>
    <property type="molecule type" value="Genomic_RNA"/>
</dbReference>
<dbReference type="RefSeq" id="NP_056788.1">
    <property type="nucleotide sequence ID" value="NC_001434.1"/>
</dbReference>
<dbReference type="SMR" id="Q81871"/>
<dbReference type="iPTMnet" id="Q81871"/>
<dbReference type="DNASU" id="1494410"/>
<dbReference type="KEGG" id="vg:1494410"/>
<dbReference type="Proteomes" id="UP000006705">
    <property type="component" value="Segment"/>
</dbReference>
<dbReference type="Proteomes" id="UP000102625">
    <property type="component" value="Genome"/>
</dbReference>
<dbReference type="GO" id="GO:0005576">
    <property type="term" value="C:extracellular region"/>
    <property type="evidence" value="ECO:0007669"/>
    <property type="project" value="UniProtKB-SubCell"/>
</dbReference>
<dbReference type="GO" id="GO:0044165">
    <property type="term" value="C:host cell endoplasmic reticulum"/>
    <property type="evidence" value="ECO:0007669"/>
    <property type="project" value="UniProtKB-SubCell"/>
</dbReference>
<dbReference type="GO" id="GO:0044177">
    <property type="term" value="C:host cell Golgi apparatus"/>
    <property type="evidence" value="ECO:0007669"/>
    <property type="project" value="UniProtKB-SubCell"/>
</dbReference>
<dbReference type="GO" id="GO:0042025">
    <property type="term" value="C:host cell nucleus"/>
    <property type="evidence" value="ECO:0007669"/>
    <property type="project" value="UniProtKB-SubCell"/>
</dbReference>
<dbReference type="GO" id="GO:0044228">
    <property type="term" value="C:host cell surface"/>
    <property type="evidence" value="ECO:0007669"/>
    <property type="project" value="UniProtKB-SubCell"/>
</dbReference>
<dbReference type="GO" id="GO:0039615">
    <property type="term" value="C:T=1 icosahedral viral capsid"/>
    <property type="evidence" value="ECO:0007669"/>
    <property type="project" value="UniProtKB-KW"/>
</dbReference>
<dbReference type="GO" id="GO:0003723">
    <property type="term" value="F:RNA binding"/>
    <property type="evidence" value="ECO:0007669"/>
    <property type="project" value="UniProtKB-KW"/>
</dbReference>
<dbReference type="GO" id="GO:0005198">
    <property type="term" value="F:structural molecule activity"/>
    <property type="evidence" value="ECO:0007669"/>
    <property type="project" value="InterPro"/>
</dbReference>
<dbReference type="GO" id="GO:0098670">
    <property type="term" value="P:entry receptor-mediated virion attachment to host cell"/>
    <property type="evidence" value="ECO:0007669"/>
    <property type="project" value="UniProtKB-KW"/>
</dbReference>
<dbReference type="GO" id="GO:0046718">
    <property type="term" value="P:symbiont entry into host cell"/>
    <property type="evidence" value="ECO:0007669"/>
    <property type="project" value="UniProtKB-KW"/>
</dbReference>
<dbReference type="FunFam" id="2.40.30.190:FF:000001">
    <property type="entry name" value="Secreted protein ORF2"/>
    <property type="match status" value="1"/>
</dbReference>
<dbReference type="FunFam" id="2.60.120.20:FF:000010">
    <property type="entry name" value="Secreted protein ORF2"/>
    <property type="match status" value="1"/>
</dbReference>
<dbReference type="Gene3D" id="2.40.30.190">
    <property type="match status" value="1"/>
</dbReference>
<dbReference type="Gene3D" id="2.60.120.20">
    <property type="match status" value="1"/>
</dbReference>
<dbReference type="InterPro" id="IPR048794">
    <property type="entry name" value="SP2_C"/>
</dbReference>
<dbReference type="InterPro" id="IPR048802">
    <property type="entry name" value="SP2_M"/>
</dbReference>
<dbReference type="InterPro" id="IPR004261">
    <property type="entry name" value="SP2_N"/>
</dbReference>
<dbReference type="InterPro" id="IPR029053">
    <property type="entry name" value="Viral_coat"/>
</dbReference>
<dbReference type="Pfam" id="PF03014">
    <property type="entry name" value="SP2"/>
    <property type="match status" value="1"/>
</dbReference>
<dbReference type="Pfam" id="PF20752">
    <property type="entry name" value="SP2_C"/>
    <property type="match status" value="2"/>
</dbReference>
<dbReference type="Pfam" id="PF20751">
    <property type="entry name" value="SP2_M"/>
    <property type="match status" value="1"/>
</dbReference>
<dbReference type="SUPFAM" id="SSF88633">
    <property type="entry name" value="Positive stranded ssRNA viruses"/>
    <property type="match status" value="1"/>
</dbReference>
<reference key="1">
    <citation type="journal article" date="1993" name="Virus Res.">
        <title>The sequence of hepatitis E virus isolated directly from a single source during an outbreak in China.</title>
        <authorList>
            <person name="Bi S.L."/>
            <person name="Purdy M.A."/>
            <person name="McCaustland K.A."/>
            <person name="Margolis H.S."/>
            <person name="Bradley D.W."/>
        </authorList>
    </citation>
    <scope>NUCLEOTIDE SEQUENCE [GENOMIC RNA]</scope>
</reference>
<reference key="2">
    <citation type="journal article" date="2009" name="J. Virol.">
        <title>Heparan sulfate proteoglycans are required for cellular binding of the hepatitis E virus ORF2 capsid protein and for viral infection.</title>
        <authorList>
            <person name="Kalia M."/>
            <person name="Chandra V."/>
            <person name="Rahman S.A."/>
            <person name="Sehgal D."/>
            <person name="Jameel S."/>
        </authorList>
    </citation>
    <scope>FUNCTION (ISOFORM CAPSID PROTEIN ORF2)</scope>
</reference>
<reference key="3">
    <citation type="journal article" date="2016" name="J. Med. Virol.">
        <title>Asialoglycoprotein receptor facilitates infection of PLC/PRF/5 cells by HEV through interaction with ORF2.</title>
        <authorList>
            <person name="Zhang L."/>
            <person name="Tian Y."/>
            <person name="Wen Z."/>
            <person name="Zhang F."/>
            <person name="Qi Y."/>
            <person name="Huang W."/>
            <person name="Zhang H."/>
            <person name="Wang Y."/>
        </authorList>
    </citation>
    <scope>FUNCTION (ISOFORM CAPSID PROTEIN ORF2)</scope>
    <scope>INTERACTION WITH HOST ASGR1 AND ASGR2 (ISOFORM CAPSID PROTEIN ORF2)</scope>
</reference>
<reference key="4">
    <citation type="journal article" date="2017" name="Virus Res.">
        <title>Systematic identification of hepatitis E virus ORF2 interactome reveals that TMEM134 engages in ORF2-mediated NF-kappaB pathway.</title>
        <authorList>
            <person name="Tian Y."/>
            <person name="Huang W."/>
            <person name="Yang J."/>
            <person name="Wen Z."/>
            <person name="Geng Y."/>
            <person name="Zhao C."/>
            <person name="Zhang H."/>
            <person name="Wang Y."/>
        </authorList>
    </citation>
    <scope>INTERACTION WITH HOST TMEM134 (ISOFORM CAPSID PROTEIN ORF2)</scope>
    <scope>SUBCELLULAR LOCATION (ISOFORM CAPSID PROTEIN ORF2)</scope>
    <source>
        <strain>W2-1 HEV</strain>
    </source>
</reference>
<reference key="5">
    <citation type="journal article" date="2018" name="Sci. Rep.">
        <title>Dimerization: a structural feature for the protection of hepatitis E virus capsid protein against trypsinization.</title>
        <authorList>
            <person name="Wei W."/>
            <person name="Behloul N."/>
            <person name="Baha S."/>
            <person name="Liu Z."/>
            <person name="Aslam M.S."/>
            <person name="Meng J."/>
        </authorList>
    </citation>
    <scope>SUBUNIT (ISOFORM CAPSID PROTEIN ORF2)</scope>
    <scope>MUTAGENESIS OF ALA-597; VAL-598; ALA-599; LEU-601 AND ALA-602</scope>
</reference>
<reference key="6">
    <citation type="journal article" date="2019" name="Sci. Rep.">
        <title>New insights into the ORF2 capsid protein, a key player of the hepatitis E virus lifecycle.</title>
        <authorList>
            <person name="Ankavay M."/>
            <person name="Montpellier C."/>
            <person name="Sayed I.M."/>
            <person name="Saliou J.M."/>
            <person name="Wychowski C."/>
            <person name="Saas L."/>
            <person name="Duvet S."/>
            <person name="Aliouat-Denis C.M."/>
            <person name="Farhat R."/>
            <person name="de Masson d'Autume V."/>
            <person name="Meuleman P."/>
            <person name="Dubuisson J."/>
            <person name="Cocquerel L."/>
        </authorList>
    </citation>
    <scope>GLYCOSYLATION AT ASN-137 ASN-562 (ISOFORM SECRETED PROTEIN ORF2)</scope>
    <scope>SUBCELLULAR LOCATION (ISOFORM SECRETED PROTEIN ORF2)</scope>
    <scope>SUBCELLULAR LOCATION (ISOFORM CAPSID PROTEIN ORF2)</scope>
</reference>
<reference key="7">
    <citation type="journal article" date="2021" name="Pathogens">
        <title>The Capsid (ORF2) Protein of Hepatitis E Virus in Feces Is C-Terminally Truncated.</title>
        <authorList>
            <person name="Nishiyama T."/>
            <person name="Umezawa K."/>
            <person name="Yamada K."/>
            <person name="Takahashi M."/>
            <person name="Kunita S."/>
            <person name="Mulyanto X."/>
            <person name="Kii I."/>
            <person name="Okamoto H."/>
        </authorList>
    </citation>
    <scope>PROTEOLYTIC CLEAVAGE (ISOFORM CAPSID PROTEIN ORF2)</scope>
    <source>
        <strain>Isolate JE03-1760F</strain>
    </source>
</reference>
<reference key="8">
    <citation type="journal article" date="2022" name="Proc. Natl. Acad. Sci. U.S.A.">
        <title>A ribavirin-induced ORF2 single-nucleotide variant produces defective hepatitis E virus particles with immune decoy function.</title>
        <authorList>
            <person name="Meister T.L."/>
            <person name="Brueggemann Y."/>
            <person name="Nocke M.K."/>
            <person name="Ulrich R.G."/>
            <person name="Schuhenn J."/>
            <person name="Sutter K."/>
            <person name="Goemer A."/>
            <person name="Bader V."/>
            <person name="Winklhofer K.F."/>
            <person name="Broering R."/>
            <person name="Verhoye L."/>
            <person name="Meuleman P."/>
            <person name="Vondran F.W.R."/>
            <person name="Camuzet C."/>
            <person name="Cocquerel L."/>
            <person name="Todt D."/>
            <person name="Steinmann E."/>
        </authorList>
    </citation>
    <scope>VARIANT SER-79</scope>
</reference>
<organism>
    <name type="scientific">Hepatitis E virus genotype 1 (isolate Human/China/HeBei/1987)</name>
    <name type="common">HEV</name>
    <dbReference type="NCBI Taxonomy" id="652674"/>
    <lineage>
        <taxon>Viruses</taxon>
        <taxon>Riboviria</taxon>
        <taxon>Orthornavirae</taxon>
        <taxon>Kitrinoviricota</taxon>
        <taxon>Alsuviricetes</taxon>
        <taxon>Hepelivirales</taxon>
        <taxon>Hepeviridae</taxon>
        <taxon>Orthohepevirinae</taxon>
        <taxon>Paslahepevirus</taxon>
        <taxon>Hepatitis E virus</taxon>
    </lineage>
</organism>
<keyword id="KW-0024">Alternative initiation</keyword>
<keyword id="KW-0167">Capsid protein</keyword>
<keyword id="KW-0325">Glycoprotein</keyword>
<keyword id="KW-1035">Host cytoplasm</keyword>
<keyword id="KW-1038">Host endoplasmic reticulum</keyword>
<keyword id="KW-1040">Host Golgi apparatus</keyword>
<keyword id="KW-1048">Host nucleus</keyword>
<keyword id="KW-0945">Host-virus interaction</keyword>
<keyword id="KW-1185">Reference proteome</keyword>
<keyword id="KW-0694">RNA-binding</keyword>
<keyword id="KW-0964">Secreted</keyword>
<keyword id="KW-0732">Signal</keyword>
<keyword id="KW-1140">T=1 icosahedral capsid protein</keyword>
<keyword id="KW-1161">Viral attachment to host cell</keyword>
<keyword id="KW-1234">Viral attachment to host entry receptor</keyword>
<keyword id="KW-0946">Virion</keyword>
<keyword id="KW-1160">Virus entry into host cell</keyword>
<feature type="signal peptide" evidence="5">
    <location>
        <begin position="1"/>
        <end position="19"/>
    </location>
</feature>
<feature type="chain" id="PRO_0000445486" description="Pro-secreted protein ORF2" evidence="5">
    <location>
        <begin position="20"/>
        <end position="660"/>
    </location>
</feature>
<feature type="chain" id="PRO_0000456929" description="Secreted protein ORF2" evidence="2">
    <location>
        <begin position="34"/>
        <end position="660"/>
    </location>
</feature>
<feature type="region of interest" description="Disordered" evidence="6">
    <location>
        <begin position="18"/>
        <end position="44"/>
    </location>
</feature>
<feature type="region of interest" description="Disordered" evidence="6">
    <location>
        <begin position="64"/>
        <end position="123"/>
    </location>
</feature>
<feature type="region of interest" description="particle formation" evidence="1">
    <location>
        <begin position="368"/>
        <end position="394"/>
    </location>
</feature>
<feature type="region of interest" description="Oligomerization" evidence="1">
    <location>
        <begin position="585"/>
        <end position="610"/>
    </location>
</feature>
<feature type="short sequence motif" description="Nuclear localization signal" evidence="2">
    <location>
        <begin position="28"/>
        <end position="33"/>
    </location>
</feature>
<feature type="compositionally biased region" description="Low complexity" evidence="6">
    <location>
        <begin position="92"/>
        <end position="116"/>
    </location>
</feature>
<feature type="site" description="Cleavage" evidence="2">
    <location>
        <begin position="33"/>
        <end position="34"/>
    </location>
</feature>
<feature type="site" description="Possible cleavage" evidence="11">
    <location>
        <begin position="578"/>
        <end position="579"/>
    </location>
</feature>
<feature type="site" description="Possible cleavage" evidence="11">
    <location>
        <begin position="601"/>
        <end position="602"/>
    </location>
</feature>
<feature type="glycosylation site" description="N-linked (GlcNAc...) asparagine; by host" evidence="10">
    <location>
        <position position="137"/>
    </location>
</feature>
<feature type="glycosylation site" description="N-linked (GlcNAc...) asparagine; by host" evidence="3">
    <location>
        <position position="310"/>
    </location>
</feature>
<feature type="glycosylation site" description="N-linked (GlcNAc...) asparagine; by host" evidence="10">
    <location>
        <position position="562"/>
    </location>
</feature>
<feature type="splice variant" id="VSP_059886" description="In isoform Capsid protein.">
    <location>
        <begin position="1"/>
        <end position="15"/>
    </location>
</feature>
<feature type="sequence variant" description="Defective viral particles with a loss of infectiousness." evidence="12">
    <original>P</original>
    <variation>S</variation>
    <location>
        <position position="79"/>
    </location>
</feature>